<keyword id="KW-0067">ATP-binding</keyword>
<keyword id="KW-0963">Cytoplasm</keyword>
<keyword id="KW-0418">Kinase</keyword>
<keyword id="KW-0520">NAD</keyword>
<keyword id="KW-0521">NADP</keyword>
<keyword id="KW-0547">Nucleotide-binding</keyword>
<keyword id="KW-0808">Transferase</keyword>
<feature type="chain" id="PRO_1000120861" description="NAD kinase">
    <location>
        <begin position="1"/>
        <end position="296"/>
    </location>
</feature>
<feature type="active site" description="Proton acceptor" evidence="1">
    <location>
        <position position="73"/>
    </location>
</feature>
<feature type="binding site" evidence="1">
    <location>
        <begin position="73"/>
        <end position="74"/>
    </location>
    <ligand>
        <name>NAD(+)</name>
        <dbReference type="ChEBI" id="CHEBI:57540"/>
    </ligand>
</feature>
<feature type="binding site" evidence="1">
    <location>
        <position position="78"/>
    </location>
    <ligand>
        <name>NAD(+)</name>
        <dbReference type="ChEBI" id="CHEBI:57540"/>
    </ligand>
</feature>
<feature type="binding site" evidence="1">
    <location>
        <begin position="151"/>
        <end position="152"/>
    </location>
    <ligand>
        <name>NAD(+)</name>
        <dbReference type="ChEBI" id="CHEBI:57540"/>
    </ligand>
</feature>
<feature type="binding site" evidence="1">
    <location>
        <position position="178"/>
    </location>
    <ligand>
        <name>NAD(+)</name>
        <dbReference type="ChEBI" id="CHEBI:57540"/>
    </ligand>
</feature>
<feature type="binding site" evidence="1">
    <location>
        <position position="180"/>
    </location>
    <ligand>
        <name>NAD(+)</name>
        <dbReference type="ChEBI" id="CHEBI:57540"/>
    </ligand>
</feature>
<feature type="binding site" evidence="1">
    <location>
        <begin position="191"/>
        <end position="196"/>
    </location>
    <ligand>
        <name>NAD(+)</name>
        <dbReference type="ChEBI" id="CHEBI:57540"/>
    </ligand>
</feature>
<accession>B2SDS9</accession>
<name>NADK_FRATM</name>
<gene>
    <name evidence="1" type="primary">nadK</name>
    <name type="ordered locus">FTM_1468</name>
</gene>
<organism>
    <name type="scientific">Francisella tularensis subsp. mediasiatica (strain FSC147)</name>
    <dbReference type="NCBI Taxonomy" id="441952"/>
    <lineage>
        <taxon>Bacteria</taxon>
        <taxon>Pseudomonadati</taxon>
        <taxon>Pseudomonadota</taxon>
        <taxon>Gammaproteobacteria</taxon>
        <taxon>Thiotrichales</taxon>
        <taxon>Francisellaceae</taxon>
        <taxon>Francisella</taxon>
    </lineage>
</organism>
<evidence type="ECO:0000255" key="1">
    <source>
        <dbReference type="HAMAP-Rule" id="MF_00361"/>
    </source>
</evidence>
<protein>
    <recommendedName>
        <fullName evidence="1">NAD kinase</fullName>
        <ecNumber evidence="1">2.7.1.23</ecNumber>
    </recommendedName>
    <alternativeName>
        <fullName evidence="1">ATP-dependent NAD kinase</fullName>
    </alternativeName>
</protein>
<reference key="1">
    <citation type="journal article" date="2009" name="PLoS Pathog.">
        <title>Molecular evolutionary consequences of niche restriction in Francisella tularensis, a facultative intracellular pathogen.</title>
        <authorList>
            <person name="Larsson P."/>
            <person name="Elfsmark D."/>
            <person name="Svensson K."/>
            <person name="Wikstroem P."/>
            <person name="Forsman M."/>
            <person name="Brettin T."/>
            <person name="Keim P."/>
            <person name="Johansson A."/>
        </authorList>
    </citation>
    <scope>NUCLEOTIDE SEQUENCE [LARGE SCALE GENOMIC DNA]</scope>
    <source>
        <strain>FSC147</strain>
    </source>
</reference>
<dbReference type="EC" id="2.7.1.23" evidence="1"/>
<dbReference type="EMBL" id="CP000915">
    <property type="protein sequence ID" value="ACD31293.1"/>
    <property type="molecule type" value="Genomic_DNA"/>
</dbReference>
<dbReference type="SMR" id="B2SDS9"/>
<dbReference type="KEGG" id="ftm:FTM_1468"/>
<dbReference type="HOGENOM" id="CLU_008831_0_1_6"/>
<dbReference type="GO" id="GO:0005737">
    <property type="term" value="C:cytoplasm"/>
    <property type="evidence" value="ECO:0007669"/>
    <property type="project" value="UniProtKB-SubCell"/>
</dbReference>
<dbReference type="GO" id="GO:0005524">
    <property type="term" value="F:ATP binding"/>
    <property type="evidence" value="ECO:0007669"/>
    <property type="project" value="UniProtKB-KW"/>
</dbReference>
<dbReference type="GO" id="GO:0046872">
    <property type="term" value="F:metal ion binding"/>
    <property type="evidence" value="ECO:0007669"/>
    <property type="project" value="UniProtKB-UniRule"/>
</dbReference>
<dbReference type="GO" id="GO:0051287">
    <property type="term" value="F:NAD binding"/>
    <property type="evidence" value="ECO:0007669"/>
    <property type="project" value="UniProtKB-ARBA"/>
</dbReference>
<dbReference type="GO" id="GO:0003951">
    <property type="term" value="F:NAD+ kinase activity"/>
    <property type="evidence" value="ECO:0007669"/>
    <property type="project" value="UniProtKB-UniRule"/>
</dbReference>
<dbReference type="GO" id="GO:0019674">
    <property type="term" value="P:NAD metabolic process"/>
    <property type="evidence" value="ECO:0007669"/>
    <property type="project" value="InterPro"/>
</dbReference>
<dbReference type="GO" id="GO:0006741">
    <property type="term" value="P:NADP biosynthetic process"/>
    <property type="evidence" value="ECO:0007669"/>
    <property type="project" value="UniProtKB-UniRule"/>
</dbReference>
<dbReference type="Gene3D" id="3.40.50.10330">
    <property type="entry name" value="Probable inorganic polyphosphate/atp-NAD kinase, domain 1"/>
    <property type="match status" value="1"/>
</dbReference>
<dbReference type="Gene3D" id="2.60.200.30">
    <property type="entry name" value="Probable inorganic polyphosphate/atp-NAD kinase, domain 2"/>
    <property type="match status" value="1"/>
</dbReference>
<dbReference type="HAMAP" id="MF_00361">
    <property type="entry name" value="NAD_kinase"/>
    <property type="match status" value="1"/>
</dbReference>
<dbReference type="InterPro" id="IPR017438">
    <property type="entry name" value="ATP-NAD_kinase_N"/>
</dbReference>
<dbReference type="InterPro" id="IPR017437">
    <property type="entry name" value="ATP-NAD_kinase_PpnK-typ_C"/>
</dbReference>
<dbReference type="InterPro" id="IPR016064">
    <property type="entry name" value="NAD/diacylglycerol_kinase_sf"/>
</dbReference>
<dbReference type="InterPro" id="IPR002504">
    <property type="entry name" value="NADK"/>
</dbReference>
<dbReference type="PANTHER" id="PTHR20275">
    <property type="entry name" value="NAD KINASE"/>
    <property type="match status" value="1"/>
</dbReference>
<dbReference type="PANTHER" id="PTHR20275:SF0">
    <property type="entry name" value="NAD KINASE"/>
    <property type="match status" value="1"/>
</dbReference>
<dbReference type="Pfam" id="PF01513">
    <property type="entry name" value="NAD_kinase"/>
    <property type="match status" value="1"/>
</dbReference>
<dbReference type="Pfam" id="PF20143">
    <property type="entry name" value="NAD_kinase_C"/>
    <property type="match status" value="1"/>
</dbReference>
<dbReference type="SUPFAM" id="SSF111331">
    <property type="entry name" value="NAD kinase/diacylglycerol kinase-like"/>
    <property type="match status" value="1"/>
</dbReference>
<sequence length="296" mass="32486">MAFKYHKVAIVGKHYKKEVSQMVETLYAYLQQQGLEIIIENDTAADTSLVNVAIASLKEIALRCDVAIVVGGDGNFLKASRLLALYSNIPVIGINKGKLGFLTTLAADDNALKNDLYAILKGDSSVTKMSMLKYRVDNNLRAPLEASIALNEIAITASRGLMFGLKVFIDGRYAFDQRGDGLIVSTPTGSTAHAMSAGGPILNPNQNSVVLVPICSHSLNSRPLVISDESVIDIYITDYNDPEPVLSIDGRHDTILKAHQKVTIQKARKKVTVLHTKDYNYYDTLREKLGWSKVLF</sequence>
<proteinExistence type="inferred from homology"/>
<comment type="function">
    <text evidence="1">Involved in the regulation of the intracellular balance of NAD and NADP, and is a key enzyme in the biosynthesis of NADP. Catalyzes specifically the phosphorylation on 2'-hydroxyl of the adenosine moiety of NAD to yield NADP.</text>
</comment>
<comment type="catalytic activity">
    <reaction evidence="1">
        <text>NAD(+) + ATP = ADP + NADP(+) + H(+)</text>
        <dbReference type="Rhea" id="RHEA:18629"/>
        <dbReference type="ChEBI" id="CHEBI:15378"/>
        <dbReference type="ChEBI" id="CHEBI:30616"/>
        <dbReference type="ChEBI" id="CHEBI:57540"/>
        <dbReference type="ChEBI" id="CHEBI:58349"/>
        <dbReference type="ChEBI" id="CHEBI:456216"/>
        <dbReference type="EC" id="2.7.1.23"/>
    </reaction>
</comment>
<comment type="cofactor">
    <cofactor evidence="1">
        <name>a divalent metal cation</name>
        <dbReference type="ChEBI" id="CHEBI:60240"/>
    </cofactor>
</comment>
<comment type="subcellular location">
    <subcellularLocation>
        <location evidence="1">Cytoplasm</location>
    </subcellularLocation>
</comment>
<comment type="similarity">
    <text evidence="1">Belongs to the NAD kinase family.</text>
</comment>